<name>SPEE_ECO55</name>
<protein>
    <recommendedName>
        <fullName evidence="1">Polyamine aminopropyltransferase</fullName>
    </recommendedName>
    <alternativeName>
        <fullName evidence="1">Putrescine aminopropyltransferase</fullName>
        <shortName evidence="1">PAPT</shortName>
    </alternativeName>
    <alternativeName>
        <fullName evidence="1">Spermidine synthase</fullName>
        <shortName evidence="1">SPDS</shortName>
        <shortName evidence="1">SPDSY</shortName>
        <ecNumber evidence="1">2.5.1.16</ecNumber>
    </alternativeName>
</protein>
<feature type="chain" id="PRO_1000197468" description="Polyamine aminopropyltransferase">
    <location>
        <begin position="1"/>
        <end position="288"/>
    </location>
</feature>
<feature type="domain" description="PABS" evidence="1">
    <location>
        <begin position="9"/>
        <end position="238"/>
    </location>
</feature>
<feature type="active site" description="Proton acceptor" evidence="1">
    <location>
        <position position="158"/>
    </location>
</feature>
<feature type="binding site" evidence="1">
    <location>
        <position position="33"/>
    </location>
    <ligand>
        <name>S-methyl-5'-thioadenosine</name>
        <dbReference type="ChEBI" id="CHEBI:17509"/>
    </ligand>
</feature>
<feature type="binding site" evidence="1">
    <location>
        <position position="64"/>
    </location>
    <ligand>
        <name>spermidine</name>
        <dbReference type="ChEBI" id="CHEBI:57834"/>
    </ligand>
</feature>
<feature type="binding site" evidence="1">
    <location>
        <position position="88"/>
    </location>
    <ligand>
        <name>spermidine</name>
        <dbReference type="ChEBI" id="CHEBI:57834"/>
    </ligand>
</feature>
<feature type="binding site" evidence="1">
    <location>
        <position position="108"/>
    </location>
    <ligand>
        <name>S-methyl-5'-thioadenosine</name>
        <dbReference type="ChEBI" id="CHEBI:17509"/>
    </ligand>
</feature>
<feature type="binding site" evidence="1">
    <location>
        <begin position="140"/>
        <end position="141"/>
    </location>
    <ligand>
        <name>S-methyl-5'-thioadenosine</name>
        <dbReference type="ChEBI" id="CHEBI:17509"/>
    </ligand>
</feature>
<feature type="binding site" evidence="1">
    <location>
        <begin position="158"/>
        <end position="161"/>
    </location>
    <ligand>
        <name>spermidine</name>
        <dbReference type="ChEBI" id="CHEBI:57834"/>
    </ligand>
</feature>
<feature type="binding site" evidence="1">
    <location>
        <position position="165"/>
    </location>
    <ligand>
        <name>S-methyl-5'-thioadenosine</name>
        <dbReference type="ChEBI" id="CHEBI:17509"/>
    </ligand>
</feature>
<dbReference type="EC" id="2.5.1.16" evidence="1"/>
<dbReference type="EMBL" id="CU928145">
    <property type="protein sequence ID" value="CAU96002.1"/>
    <property type="molecule type" value="Genomic_DNA"/>
</dbReference>
<dbReference type="RefSeq" id="WP_000818411.1">
    <property type="nucleotide sequence ID" value="NC_011748.1"/>
</dbReference>
<dbReference type="SMR" id="B7LFY8"/>
<dbReference type="GeneID" id="75202064"/>
<dbReference type="KEGG" id="eck:EC55989_0114"/>
<dbReference type="HOGENOM" id="CLU_048199_0_0_6"/>
<dbReference type="UniPathway" id="UPA00248">
    <property type="reaction ID" value="UER00314"/>
</dbReference>
<dbReference type="Proteomes" id="UP000000746">
    <property type="component" value="Chromosome"/>
</dbReference>
<dbReference type="GO" id="GO:0005829">
    <property type="term" value="C:cytosol"/>
    <property type="evidence" value="ECO:0007669"/>
    <property type="project" value="TreeGrafter"/>
</dbReference>
<dbReference type="GO" id="GO:0004766">
    <property type="term" value="F:spermidine synthase activity"/>
    <property type="evidence" value="ECO:0007669"/>
    <property type="project" value="UniProtKB-UniRule"/>
</dbReference>
<dbReference type="GO" id="GO:0008295">
    <property type="term" value="P:spermidine biosynthetic process"/>
    <property type="evidence" value="ECO:0007669"/>
    <property type="project" value="UniProtKB-UniRule"/>
</dbReference>
<dbReference type="CDD" id="cd02440">
    <property type="entry name" value="AdoMet_MTases"/>
    <property type="match status" value="1"/>
</dbReference>
<dbReference type="FunFam" id="2.30.140.10:FF:000002">
    <property type="entry name" value="Polyamine aminopropyltransferase"/>
    <property type="match status" value="1"/>
</dbReference>
<dbReference type="FunFam" id="3.40.50.150:FF:000026">
    <property type="entry name" value="Polyamine aminopropyltransferase"/>
    <property type="match status" value="1"/>
</dbReference>
<dbReference type="Gene3D" id="2.30.140.10">
    <property type="entry name" value="Spermidine synthase, tetramerisation domain"/>
    <property type="match status" value="1"/>
</dbReference>
<dbReference type="Gene3D" id="3.40.50.150">
    <property type="entry name" value="Vaccinia Virus protein VP39"/>
    <property type="match status" value="1"/>
</dbReference>
<dbReference type="HAMAP" id="MF_00198">
    <property type="entry name" value="Spermidine_synth"/>
    <property type="match status" value="1"/>
</dbReference>
<dbReference type="InterPro" id="IPR030374">
    <property type="entry name" value="PABS"/>
</dbReference>
<dbReference type="InterPro" id="IPR030373">
    <property type="entry name" value="PABS_CS"/>
</dbReference>
<dbReference type="InterPro" id="IPR029063">
    <property type="entry name" value="SAM-dependent_MTases_sf"/>
</dbReference>
<dbReference type="InterPro" id="IPR001045">
    <property type="entry name" value="Spermi_synthase"/>
</dbReference>
<dbReference type="InterPro" id="IPR035246">
    <property type="entry name" value="Spermidine_synt_N"/>
</dbReference>
<dbReference type="InterPro" id="IPR037163">
    <property type="entry name" value="Spermidine_synt_N_sf"/>
</dbReference>
<dbReference type="NCBIfam" id="NF037959">
    <property type="entry name" value="MFS_SpdSyn"/>
    <property type="match status" value="1"/>
</dbReference>
<dbReference type="NCBIfam" id="NF002010">
    <property type="entry name" value="PRK00811.1"/>
    <property type="match status" value="1"/>
</dbReference>
<dbReference type="NCBIfam" id="TIGR00417">
    <property type="entry name" value="speE"/>
    <property type="match status" value="1"/>
</dbReference>
<dbReference type="PANTHER" id="PTHR11558:SF11">
    <property type="entry name" value="SPERMIDINE SYNTHASE"/>
    <property type="match status" value="1"/>
</dbReference>
<dbReference type="PANTHER" id="PTHR11558">
    <property type="entry name" value="SPERMIDINE/SPERMINE SYNTHASE"/>
    <property type="match status" value="1"/>
</dbReference>
<dbReference type="Pfam" id="PF17284">
    <property type="entry name" value="Spermine_synt_N"/>
    <property type="match status" value="1"/>
</dbReference>
<dbReference type="Pfam" id="PF01564">
    <property type="entry name" value="Spermine_synth"/>
    <property type="match status" value="1"/>
</dbReference>
<dbReference type="SUPFAM" id="SSF53335">
    <property type="entry name" value="S-adenosyl-L-methionine-dependent methyltransferases"/>
    <property type="match status" value="1"/>
</dbReference>
<dbReference type="PROSITE" id="PS01330">
    <property type="entry name" value="PABS_1"/>
    <property type="match status" value="1"/>
</dbReference>
<dbReference type="PROSITE" id="PS51006">
    <property type="entry name" value="PABS_2"/>
    <property type="match status" value="1"/>
</dbReference>
<evidence type="ECO:0000255" key="1">
    <source>
        <dbReference type="HAMAP-Rule" id="MF_00198"/>
    </source>
</evidence>
<gene>
    <name evidence="1" type="primary">speE</name>
    <name type="ordered locus">EC55989_0114</name>
</gene>
<keyword id="KW-0963">Cytoplasm</keyword>
<keyword id="KW-0620">Polyamine biosynthesis</keyword>
<keyword id="KW-1185">Reference proteome</keyword>
<keyword id="KW-0745">Spermidine biosynthesis</keyword>
<keyword id="KW-0808">Transferase</keyword>
<organism>
    <name type="scientific">Escherichia coli (strain 55989 / EAEC)</name>
    <dbReference type="NCBI Taxonomy" id="585055"/>
    <lineage>
        <taxon>Bacteria</taxon>
        <taxon>Pseudomonadati</taxon>
        <taxon>Pseudomonadota</taxon>
        <taxon>Gammaproteobacteria</taxon>
        <taxon>Enterobacterales</taxon>
        <taxon>Enterobacteriaceae</taxon>
        <taxon>Escherichia</taxon>
    </lineage>
</organism>
<proteinExistence type="inferred from homology"/>
<reference key="1">
    <citation type="journal article" date="2009" name="PLoS Genet.">
        <title>Organised genome dynamics in the Escherichia coli species results in highly diverse adaptive paths.</title>
        <authorList>
            <person name="Touchon M."/>
            <person name="Hoede C."/>
            <person name="Tenaillon O."/>
            <person name="Barbe V."/>
            <person name="Baeriswyl S."/>
            <person name="Bidet P."/>
            <person name="Bingen E."/>
            <person name="Bonacorsi S."/>
            <person name="Bouchier C."/>
            <person name="Bouvet O."/>
            <person name="Calteau A."/>
            <person name="Chiapello H."/>
            <person name="Clermont O."/>
            <person name="Cruveiller S."/>
            <person name="Danchin A."/>
            <person name="Diard M."/>
            <person name="Dossat C."/>
            <person name="Karoui M.E."/>
            <person name="Frapy E."/>
            <person name="Garry L."/>
            <person name="Ghigo J.M."/>
            <person name="Gilles A.M."/>
            <person name="Johnson J."/>
            <person name="Le Bouguenec C."/>
            <person name="Lescat M."/>
            <person name="Mangenot S."/>
            <person name="Martinez-Jehanne V."/>
            <person name="Matic I."/>
            <person name="Nassif X."/>
            <person name="Oztas S."/>
            <person name="Petit M.A."/>
            <person name="Pichon C."/>
            <person name="Rouy Z."/>
            <person name="Ruf C.S."/>
            <person name="Schneider D."/>
            <person name="Tourret J."/>
            <person name="Vacherie B."/>
            <person name="Vallenet D."/>
            <person name="Medigue C."/>
            <person name="Rocha E.P.C."/>
            <person name="Denamur E."/>
        </authorList>
    </citation>
    <scope>NUCLEOTIDE SEQUENCE [LARGE SCALE GENOMIC DNA]</scope>
    <source>
        <strain>55989 / EAEC</strain>
    </source>
</reference>
<sequence length="288" mass="32321">MAEKKQWHETLHDQFGQYFAVDNVLYHEKTDHQDLIIFENAAFGRVMALDGVVQTTERDEFIYHEMMTHVPLLAHGHAKHVLIIGGGDGAMLREVTRHKNVESITMVEIDAGVVSFCRQYLPNHNAGSYDDPRFKLVIDDGVNFVNQTSQTFDVIISDCTDPIGPGESLFTSAFYEGCKRCLNPGGIFVAQNGVCFLQQEEAIDSHRKLSHYFSDVGFYQAAIPTYYGGIMTFAWATDNDALRHLSTEIIQARFLASGLKCRYYNPAIHTAAFALPQYLQDALASQPS</sequence>
<accession>B7LFY8</accession>
<comment type="function">
    <text evidence="1">Catalyzes the irreversible transfer of a propylamine group from the amino donor S-adenosylmethioninamine (decarboxy-AdoMet) to putrescine (1,4-diaminobutane) to yield spermidine.</text>
</comment>
<comment type="catalytic activity">
    <reaction evidence="1">
        <text>S-adenosyl 3-(methylsulfanyl)propylamine + putrescine = S-methyl-5'-thioadenosine + spermidine + H(+)</text>
        <dbReference type="Rhea" id="RHEA:12721"/>
        <dbReference type="ChEBI" id="CHEBI:15378"/>
        <dbReference type="ChEBI" id="CHEBI:17509"/>
        <dbReference type="ChEBI" id="CHEBI:57443"/>
        <dbReference type="ChEBI" id="CHEBI:57834"/>
        <dbReference type="ChEBI" id="CHEBI:326268"/>
        <dbReference type="EC" id="2.5.1.16"/>
    </reaction>
</comment>
<comment type="pathway">
    <text evidence="1">Amine and polyamine biosynthesis; spermidine biosynthesis; spermidine from putrescine: step 1/1.</text>
</comment>
<comment type="subunit">
    <text evidence="1">Homodimer or homotetramer.</text>
</comment>
<comment type="subcellular location">
    <subcellularLocation>
        <location evidence="1">Cytoplasm</location>
    </subcellularLocation>
</comment>
<comment type="similarity">
    <text evidence="1">Belongs to the spermidine/spermine synthase family.</text>
</comment>